<dbReference type="EMBL" id="AB261607">
    <property type="protein sequence ID" value="BAF37081.1"/>
    <property type="molecule type" value="Genomic_DNA"/>
</dbReference>
<dbReference type="SMR" id="A0PA72"/>
<dbReference type="GO" id="GO:0009279">
    <property type="term" value="C:cell outer membrane"/>
    <property type="evidence" value="ECO:0007669"/>
    <property type="project" value="UniProtKB-SubCell"/>
</dbReference>
<dbReference type="Gene3D" id="2.60.40.2100">
    <property type="match status" value="1"/>
</dbReference>
<dbReference type="InterPro" id="IPR014941">
    <property type="entry name" value="FimB/Mfa2/Mfa3"/>
</dbReference>
<dbReference type="Pfam" id="PF08842">
    <property type="entry name" value="Mfa2"/>
    <property type="match status" value="1"/>
</dbReference>
<dbReference type="PROSITE" id="PS51257">
    <property type="entry name" value="PROKAR_LIPOPROTEIN"/>
    <property type="match status" value="1"/>
</dbReference>
<accession>A0PA72</accession>
<comment type="function">
    <text evidence="4 5">Anchoring subunit of the major fimbriae. Regulates fimbrial length (PubMed:20530728). These filamentous pili are attached to the cell surface; they mediate biofilm formation, adhesion onto host cells and onto other bacteria that are part of the oral microbiome. Fimbriae of P.gingivalis are major virulence factors.</text>
</comment>
<comment type="subunit">
    <text evidence="1">FimB is not part of the fimbrium itself, but anchors the fimbrium in the outer membrane. Linear, head-to-tail oligomerization of fimbrial subunits mediates assembly of the fimbrium stalk, while the minor components FimC, FimD and FimE probably form the fimbrium tip. The anchoring subunit FimB limits fimbrium length and is important for solid fimbrium attachment to the outer membrane. In its absence, the major fimbriae become very long and are easily detached from the membrane.</text>
</comment>
<comment type="subcellular location">
    <subcellularLocation>
        <location evidence="5">Cell outer membrane</location>
        <topology evidence="1">Lipid-anchor</topology>
    </subcellularLocation>
</comment>
<comment type="miscellaneous">
    <text evidence="5">The name (major fimbrium subunit) does not indicate the abundance of the protein, but is derived from the greater length of the major fimbriae. In strain ATCC 33277 and strain ATCC BAA-1703 / FDC 381, major fimbriae are 300 - 1600 nM in length and about 5 nm in diameter. In contrast, minor fimbriae are only about 80 - 120 nm long. This length difference is observed only in a small number of strains, including strain ATCC 33277 and strain ATCC BAA-1703 / FDC 381, and is due to a loss of function mutation in FimB, a protein that restricts fimbrial length in other strains.</text>
</comment>
<comment type="similarity">
    <text evidence="4">Belongs to the bacteroidetes fimbrillin superfamily. FimB/Mfa2 family.</text>
</comment>
<sequence length="305" mass="34082">MNDAKKYIVSVLILLVAGMFGGCIKEDYSDCPRPFRLTVRAWDADMQDITETGAVQRVVIFVFDETGRRIDRLMMDAAQVAARKPIPLEYDGPTTVSFVAWANPDDHMLEETANVQNVKDLFFRLSSTDGIAQSPGDLFSGVLTCPIEYGSIEQGTDQTVDIYRRTAQVHIIIRGYQEWLDANGPRQLPDYADILLGETPDTYTGLAELIGNAVQYRPDGQIQNGDFISPIFRVYPTLDTTPLHLKLYAYGQELLNISTGSDGVPFIPVIGKMLNIYIDLRGANLNVLVSVTPWDVVQQQQYAEY</sequence>
<feature type="signal peptide" evidence="2">
    <location>
        <begin position="1"/>
        <end position="22"/>
    </location>
</feature>
<feature type="chain" id="PRO_0000436788" description="Major fimbrium anchoring subunit FimB">
    <location>
        <begin position="23"/>
        <end position="305"/>
    </location>
</feature>
<feature type="lipid moiety-binding region" description="N-palmitoyl cysteine" evidence="2">
    <location>
        <position position="23"/>
    </location>
</feature>
<feature type="lipid moiety-binding region" description="S-diacylglycerol cysteine" evidence="2">
    <location>
        <position position="23"/>
    </location>
</feature>
<organism evidence="6">
    <name type="scientific">Porphyromonas gingivalis</name>
    <name type="common">Bacteroides gingivalis</name>
    <dbReference type="NCBI Taxonomy" id="837"/>
    <lineage>
        <taxon>Bacteria</taxon>
        <taxon>Pseudomonadati</taxon>
        <taxon>Bacteroidota</taxon>
        <taxon>Bacteroidia</taxon>
        <taxon>Bacteroidales</taxon>
        <taxon>Porphyromonadaceae</taxon>
        <taxon>Porphyromonas</taxon>
    </lineage>
</organism>
<name>FIMB_PORGN</name>
<proteinExistence type="inferred from homology"/>
<gene>
    <name evidence="4" type="primary">fimB</name>
</gene>
<protein>
    <recommendedName>
        <fullName>Major fimbrium anchoring subunit FimB</fullName>
    </recommendedName>
</protein>
<keyword id="KW-0998">Cell outer membrane</keyword>
<keyword id="KW-0449">Lipoprotein</keyword>
<keyword id="KW-0472">Membrane</keyword>
<keyword id="KW-0564">Palmitate</keyword>
<keyword id="KW-0732">Signal</keyword>
<evidence type="ECO:0000250" key="1">
    <source>
        <dbReference type="UniProtKB" id="A0PA81"/>
    </source>
</evidence>
<evidence type="ECO:0000255" key="2">
    <source>
        <dbReference type="PROSITE-ProRule" id="PRU00303"/>
    </source>
</evidence>
<evidence type="ECO:0000303" key="3">
    <source>
    </source>
</evidence>
<evidence type="ECO:0000305" key="4"/>
<evidence type="ECO:0000305" key="5">
    <source>
    </source>
</evidence>
<evidence type="ECO:0000312" key="6">
    <source>
        <dbReference type="EMBL" id="BAF37081.1"/>
    </source>
</evidence>
<reference evidence="6" key="1">
    <citation type="journal article" date="2007" name="Cell. Microbiol.">
        <title>Virulence of Porphyromonas gingivalis is altered by substitution of fimbria gene with different genotype.</title>
        <authorList>
            <person name="Kato T."/>
            <person name="Kawai S."/>
            <person name="Nakano K."/>
            <person name="Inaba H."/>
            <person name="Kuboniwa M."/>
            <person name="Nakagawa I."/>
            <person name="Tsuda K."/>
            <person name="Omori H."/>
            <person name="Ooshima T."/>
            <person name="Yoshimori T."/>
            <person name="Amano A."/>
        </authorList>
    </citation>
    <scope>NUCLEOTIDE SEQUENCE [GENOMIC DNA]</scope>
    <source>
        <strain evidence="6">OMZ314</strain>
    </source>
</reference>
<reference key="2">
    <citation type="journal article" date="2010" name="J. Dent. Res.">
        <title>FimB regulates FimA fimbriation in Porphyromonas gingivalis.</title>
        <authorList>
            <person name="Nagano K."/>
            <person name="Hasegawa Y."/>
            <person name="Murakami Y."/>
            <person name="Nishiyama S."/>
            <person name="Yoshimura F."/>
        </authorList>
    </citation>
    <scope>IDENTIFICATION</scope>
    <scope>SUBCELLULAR LOCATION</scope>
    <scope>FUNCTION</scope>
    <source>
        <strain evidence="3">OMZ314</strain>
    </source>
</reference>